<gene>
    <name type="primary">UTP25</name>
    <name type="ORF">BDCG_02009</name>
</gene>
<keyword id="KW-0539">Nucleus</keyword>
<keyword id="KW-0687">Ribonucleoprotein</keyword>
<keyword id="KW-0690">Ribosome biogenesis</keyword>
<keyword id="KW-0698">rRNA processing</keyword>
<comment type="function">
    <text evidence="1">DEAD-box RNA helicase-like protein required for pre-18S rRNA processing, specifically at sites A0, A1, and A2.</text>
</comment>
<comment type="subunit">
    <text evidence="1">Component of the ribosomal small subunit (SSU) processome composed of at least 40 protein subunits and snoRNA U3.</text>
</comment>
<comment type="subcellular location">
    <subcellularLocation>
        <location evidence="1">Nucleus</location>
        <location evidence="1">Nucleolus</location>
    </subcellularLocation>
</comment>
<comment type="similarity">
    <text evidence="3">Belongs to the UTP25 family.</text>
</comment>
<organism>
    <name type="scientific">Ajellomyces dermatitidis (strain ER-3 / ATCC MYA-2586)</name>
    <name type="common">Blastomyces dermatitidis</name>
    <dbReference type="NCBI Taxonomy" id="559297"/>
    <lineage>
        <taxon>Eukaryota</taxon>
        <taxon>Fungi</taxon>
        <taxon>Dikarya</taxon>
        <taxon>Ascomycota</taxon>
        <taxon>Pezizomycotina</taxon>
        <taxon>Eurotiomycetes</taxon>
        <taxon>Eurotiomycetidae</taxon>
        <taxon>Onygenales</taxon>
        <taxon>Ajellomycetaceae</taxon>
        <taxon>Blastomyces</taxon>
    </lineage>
</organism>
<proteinExistence type="inferred from homology"/>
<sequence>MVAPRGRGSRPFNSRGARGGRGRGQRGGRKPRFETSRVEEVHHEASSDGESGLSEGNVDAEDEVELIDELSSGSDDDDEEDKKTSKPYNTLLQLFNAGQDTNGPARKRRKVEHSSKKTEVQIKEPEELDDEADLSESEIEDDEEDEDAEGIAVDEGEAEDSGDEDDATDPFETHFSNVDSSLLLQQINVISTKGWKTHKNELPGKFRLVLSHPDTGGDAVQLPPPAHGLQSLKLKQKLANHAGDHIAKFESLTSGLVPYIFGYQDLLFGARTLSNSAKFRDLYCLHVLNHILKTRDRVLKNNSRSQKEPDQDLELRDQGFTRPKVLIILPTRQACVRVVESITKLYHAEQQENKSRFYDTFSAADDKSWEDKPDDFRELFGGNDDDMFRLGLKFTRKTIKYFSQFYNSDIILASPLGLRMVMDKEDGKKQDFDFLSSIEVAVVDQADALLMQNWEHIEYVFSHLNLQPKESHGCDFSRVRNWYLDGQAKYVRQTLVFSSFITPEINALFSSQMHNTAGKVKVTPTYEGAILDIPLPVPVKQTFSRFNSTSPVKDPDDRFKYFTSAVLSSLVRSSTGSGGKPHASGTLIFIPSYLDFVRVRNYLATSSQTENLSFGAISEYTSVRDVARARTHFFSGRHSALLYTERTHHFRRYQIRGVKRVIMYGVPENPVFWGEIVGFLGLDPAGTAEAAEGGVRALFSKWDALKMERIVGTKRLGNMLMEKGGDTFSFV</sequence>
<dbReference type="EMBL" id="EQ999974">
    <property type="protein sequence ID" value="EEQ86889.2"/>
    <property type="molecule type" value="Genomic_DNA"/>
</dbReference>
<dbReference type="STRING" id="559297.C5GAH0"/>
<dbReference type="eggNOG" id="KOG2340">
    <property type="taxonomic scope" value="Eukaryota"/>
</dbReference>
<dbReference type="HOGENOM" id="CLU_018705_0_1_1"/>
<dbReference type="OMA" id="QDRGDTF"/>
<dbReference type="GO" id="GO:0005730">
    <property type="term" value="C:nucleolus"/>
    <property type="evidence" value="ECO:0007669"/>
    <property type="project" value="UniProtKB-SubCell"/>
</dbReference>
<dbReference type="GO" id="GO:0032040">
    <property type="term" value="C:small-subunit processome"/>
    <property type="evidence" value="ECO:0007669"/>
    <property type="project" value="EnsemblFungi"/>
</dbReference>
<dbReference type="GO" id="GO:0019843">
    <property type="term" value="F:rRNA binding"/>
    <property type="evidence" value="ECO:0007669"/>
    <property type="project" value="EnsemblFungi"/>
</dbReference>
<dbReference type="GO" id="GO:0034511">
    <property type="term" value="F:U3 snoRNA binding"/>
    <property type="evidence" value="ECO:0007669"/>
    <property type="project" value="EnsemblFungi"/>
</dbReference>
<dbReference type="GO" id="GO:0000462">
    <property type="term" value="P:maturation of SSU-rRNA from tricistronic rRNA transcript (SSU-rRNA, 5.8S rRNA, LSU-rRNA)"/>
    <property type="evidence" value="ECO:0007669"/>
    <property type="project" value="EnsemblFungi"/>
</dbReference>
<dbReference type="FunFam" id="3.40.50.300:FF:002356">
    <property type="entry name" value="U3 small nucleolar RNA-associated protein 25"/>
    <property type="match status" value="1"/>
</dbReference>
<dbReference type="Gene3D" id="3.40.50.300">
    <property type="entry name" value="P-loop containing nucleotide triphosphate hydrolases"/>
    <property type="match status" value="1"/>
</dbReference>
<dbReference type="InterPro" id="IPR027417">
    <property type="entry name" value="P-loop_NTPase"/>
</dbReference>
<dbReference type="InterPro" id="IPR010678">
    <property type="entry name" value="UTP25"/>
</dbReference>
<dbReference type="InterPro" id="IPR053939">
    <property type="entry name" value="UTP25_C"/>
</dbReference>
<dbReference type="InterPro" id="IPR053940">
    <property type="entry name" value="UTP25_NTPase-like"/>
</dbReference>
<dbReference type="PANTHER" id="PTHR12933">
    <property type="entry name" value="ORF PROTEIN-RELATED"/>
    <property type="match status" value="1"/>
</dbReference>
<dbReference type="PANTHER" id="PTHR12933:SF0">
    <property type="entry name" value="U3 SMALL NUCLEOLAR RNA-ASSOCIATED PROTEIN 25 HOMOLOG"/>
    <property type="match status" value="1"/>
</dbReference>
<dbReference type="Pfam" id="PF06862">
    <property type="entry name" value="Utp25_C"/>
    <property type="match status" value="1"/>
</dbReference>
<dbReference type="Pfam" id="PF22916">
    <property type="entry name" value="UTP25_NTPase-like"/>
    <property type="match status" value="1"/>
</dbReference>
<dbReference type="SUPFAM" id="SSF52540">
    <property type="entry name" value="P-loop containing nucleoside triphosphate hydrolases"/>
    <property type="match status" value="1"/>
</dbReference>
<accession>C5GAH0</accession>
<reference key="1">
    <citation type="journal article" date="2015" name="PLoS Genet.">
        <title>The dynamic genome and transcriptome of the human fungal pathogen Blastomyces and close relative Emmonsia.</title>
        <authorList>
            <person name="Munoz J.F."/>
            <person name="Gauthier G.M."/>
            <person name="Desjardins C.A."/>
            <person name="Gallo J.E."/>
            <person name="Holder J."/>
            <person name="Sullivan T.D."/>
            <person name="Marty A.J."/>
            <person name="Carmen J.C."/>
            <person name="Chen Z."/>
            <person name="Ding L."/>
            <person name="Gujja S."/>
            <person name="Magrini V."/>
            <person name="Misas E."/>
            <person name="Mitreva M."/>
            <person name="Priest M."/>
            <person name="Saif S."/>
            <person name="Whiston E.A."/>
            <person name="Young S."/>
            <person name="Zeng Q."/>
            <person name="Goldman W.E."/>
            <person name="Mardis E.R."/>
            <person name="Taylor J.W."/>
            <person name="McEwen J.G."/>
            <person name="Clay O.K."/>
            <person name="Klein B.S."/>
            <person name="Cuomo C.A."/>
        </authorList>
    </citation>
    <scope>NUCLEOTIDE SEQUENCE [LARGE SCALE GENOMIC DNA]</scope>
    <source>
        <strain>ER-3 / ATCC MYA-2586</strain>
    </source>
</reference>
<feature type="chain" id="PRO_0000408094" description="U3 small nucleolar RNA-associated protein 25">
    <location>
        <begin position="1"/>
        <end position="731"/>
    </location>
</feature>
<feature type="region of interest" description="Disordered" evidence="2">
    <location>
        <begin position="1"/>
        <end position="174"/>
    </location>
</feature>
<feature type="compositionally biased region" description="Basic residues" evidence="2">
    <location>
        <begin position="18"/>
        <end position="30"/>
    </location>
</feature>
<feature type="compositionally biased region" description="Basic and acidic residues" evidence="2">
    <location>
        <begin position="31"/>
        <end position="46"/>
    </location>
</feature>
<feature type="compositionally biased region" description="Acidic residues" evidence="2">
    <location>
        <begin position="58"/>
        <end position="80"/>
    </location>
</feature>
<feature type="compositionally biased region" description="Polar residues" evidence="2">
    <location>
        <begin position="86"/>
        <end position="102"/>
    </location>
</feature>
<feature type="compositionally biased region" description="Basic and acidic residues" evidence="2">
    <location>
        <begin position="112"/>
        <end position="125"/>
    </location>
</feature>
<feature type="compositionally biased region" description="Acidic residues" evidence="2">
    <location>
        <begin position="126"/>
        <end position="169"/>
    </location>
</feature>
<evidence type="ECO:0000250" key="1"/>
<evidence type="ECO:0000256" key="2">
    <source>
        <dbReference type="SAM" id="MobiDB-lite"/>
    </source>
</evidence>
<evidence type="ECO:0000305" key="3"/>
<name>UTP25_AJEDR</name>
<protein>
    <recommendedName>
        <fullName>U3 small nucleolar RNA-associated protein 25</fullName>
        <shortName>U3 snoRNA-associated protein 25</shortName>
    </recommendedName>
    <alternativeName>
        <fullName>U three protein 25</fullName>
    </alternativeName>
</protein>